<name>TAL_TRIEI</name>
<comment type="function">
    <text evidence="1">Transaldolase is important for the balance of metabolites in the pentose-phosphate pathway.</text>
</comment>
<comment type="catalytic activity">
    <reaction evidence="1">
        <text>D-sedoheptulose 7-phosphate + D-glyceraldehyde 3-phosphate = D-erythrose 4-phosphate + beta-D-fructose 6-phosphate</text>
        <dbReference type="Rhea" id="RHEA:17053"/>
        <dbReference type="ChEBI" id="CHEBI:16897"/>
        <dbReference type="ChEBI" id="CHEBI:57483"/>
        <dbReference type="ChEBI" id="CHEBI:57634"/>
        <dbReference type="ChEBI" id="CHEBI:59776"/>
        <dbReference type="EC" id="2.2.1.2"/>
    </reaction>
</comment>
<comment type="pathway">
    <text evidence="1">Carbohydrate degradation; pentose phosphate pathway; D-glyceraldehyde 3-phosphate and beta-D-fructose 6-phosphate from D-ribose 5-phosphate and D-xylulose 5-phosphate (non-oxidative stage): step 2/3.</text>
</comment>
<comment type="subcellular location">
    <subcellularLocation>
        <location evidence="1">Cytoplasm</location>
    </subcellularLocation>
</comment>
<comment type="similarity">
    <text evidence="1">Belongs to the transaldolase family. Type 2 subfamily.</text>
</comment>
<gene>
    <name evidence="1" type="primary">tal</name>
    <name type="ordered locus">Tery_0683</name>
</gene>
<reference key="1">
    <citation type="journal article" date="2015" name="Proc. Natl. Acad. Sci. U.S.A.">
        <title>Trichodesmium genome maintains abundant, widespread noncoding DNA in situ, despite oligotrophic lifestyle.</title>
        <authorList>
            <person name="Walworth N."/>
            <person name="Pfreundt U."/>
            <person name="Nelson W.C."/>
            <person name="Mincer T."/>
            <person name="Heidelberg J.F."/>
            <person name="Fu F."/>
            <person name="Waterbury J.B."/>
            <person name="Glavina del Rio T."/>
            <person name="Goodwin L."/>
            <person name="Kyrpides N.C."/>
            <person name="Land M.L."/>
            <person name="Woyke T."/>
            <person name="Hutchins D.A."/>
            <person name="Hess W.R."/>
            <person name="Webb E.A."/>
        </authorList>
    </citation>
    <scope>NUCLEOTIDE SEQUENCE [LARGE SCALE GENOMIC DNA]</scope>
    <source>
        <strain>IMS101</strain>
    </source>
</reference>
<protein>
    <recommendedName>
        <fullName evidence="1">Transaldolase</fullName>
        <ecNumber evidence="1">2.2.1.2</ecNumber>
    </recommendedName>
</protein>
<accession>Q118F4</accession>
<sequence length="380" mass="42023">MVTNHLLEIENLGQSIWMDNLSRNIIESGELKSMIGKKGIRGITSNPAIFEKAIAGNAIYDADIEAGIKASKSVIEIYESLVFKDIRDACDIFMPVYEETKGLDGYISIEVPPTIAKDTESTISEAIRYYTAIGRENLMIKIPGTPEGLPAVTRVISEGINVNVTLLFSVESYINTAWAYIEGLEARAAKGEDIDKIASVASFFLSRIDSNIDGLIDEKLKKVTDETVKAKLEAVKGKVAIANAKIAYQEYKKIIQSDRWKALSAKGAKEQRLLWASTSTKNPAYSDVMYVDELIGPNTVNTLPPPTIDACADHCDVDNRVETNIEVTKEVMENLKDPDININIDQVMEQLLVEGIDKFIKPFTSLINSLEEKVKKLTPV</sequence>
<evidence type="ECO:0000255" key="1">
    <source>
        <dbReference type="HAMAP-Rule" id="MF_00493"/>
    </source>
</evidence>
<organism>
    <name type="scientific">Trichodesmium erythraeum (strain IMS101)</name>
    <dbReference type="NCBI Taxonomy" id="203124"/>
    <lineage>
        <taxon>Bacteria</taxon>
        <taxon>Bacillati</taxon>
        <taxon>Cyanobacteriota</taxon>
        <taxon>Cyanophyceae</taxon>
        <taxon>Oscillatoriophycideae</taxon>
        <taxon>Oscillatoriales</taxon>
        <taxon>Microcoleaceae</taxon>
        <taxon>Trichodesmium</taxon>
    </lineage>
</organism>
<dbReference type="EC" id="2.2.1.2" evidence="1"/>
<dbReference type="EMBL" id="CP000393">
    <property type="protein sequence ID" value="ABG50120.1"/>
    <property type="molecule type" value="Genomic_DNA"/>
</dbReference>
<dbReference type="RefSeq" id="WP_011610513.1">
    <property type="nucleotide sequence ID" value="NC_008312.1"/>
</dbReference>
<dbReference type="SMR" id="Q118F4"/>
<dbReference type="STRING" id="203124.Tery_0683"/>
<dbReference type="KEGG" id="ter:Tery_0683"/>
<dbReference type="eggNOG" id="COG0176">
    <property type="taxonomic scope" value="Bacteria"/>
</dbReference>
<dbReference type="HOGENOM" id="CLU_050771_1_0_3"/>
<dbReference type="OrthoDB" id="140919at2"/>
<dbReference type="UniPathway" id="UPA00115">
    <property type="reaction ID" value="UER00414"/>
</dbReference>
<dbReference type="GO" id="GO:0005737">
    <property type="term" value="C:cytoplasm"/>
    <property type="evidence" value="ECO:0007669"/>
    <property type="project" value="UniProtKB-SubCell"/>
</dbReference>
<dbReference type="GO" id="GO:0004801">
    <property type="term" value="F:transaldolase activity"/>
    <property type="evidence" value="ECO:0007669"/>
    <property type="project" value="UniProtKB-UniRule"/>
</dbReference>
<dbReference type="GO" id="GO:0005975">
    <property type="term" value="P:carbohydrate metabolic process"/>
    <property type="evidence" value="ECO:0007669"/>
    <property type="project" value="InterPro"/>
</dbReference>
<dbReference type="GO" id="GO:0006098">
    <property type="term" value="P:pentose-phosphate shunt"/>
    <property type="evidence" value="ECO:0007669"/>
    <property type="project" value="UniProtKB-UniRule"/>
</dbReference>
<dbReference type="CDD" id="cd00955">
    <property type="entry name" value="Transaldolase_like"/>
    <property type="match status" value="1"/>
</dbReference>
<dbReference type="Gene3D" id="3.20.20.70">
    <property type="entry name" value="Aldolase class I"/>
    <property type="match status" value="1"/>
</dbReference>
<dbReference type="HAMAP" id="MF_00493">
    <property type="entry name" value="Transaldolase_2"/>
    <property type="match status" value="1"/>
</dbReference>
<dbReference type="InterPro" id="IPR013785">
    <property type="entry name" value="Aldolase_TIM"/>
</dbReference>
<dbReference type="InterPro" id="IPR001585">
    <property type="entry name" value="TAL/FSA"/>
</dbReference>
<dbReference type="InterPro" id="IPR004732">
    <property type="entry name" value="Transaldolase_2"/>
</dbReference>
<dbReference type="InterPro" id="IPR018225">
    <property type="entry name" value="Transaldolase_AS"/>
</dbReference>
<dbReference type="NCBIfam" id="NF002881">
    <property type="entry name" value="PRK03343.1"/>
    <property type="match status" value="1"/>
</dbReference>
<dbReference type="NCBIfam" id="TIGR00876">
    <property type="entry name" value="tal_mycobact"/>
    <property type="match status" value="1"/>
</dbReference>
<dbReference type="PANTHER" id="PTHR10683">
    <property type="entry name" value="TRANSALDOLASE"/>
    <property type="match status" value="1"/>
</dbReference>
<dbReference type="PANTHER" id="PTHR10683:SF31">
    <property type="entry name" value="TRANSALDOLASE"/>
    <property type="match status" value="1"/>
</dbReference>
<dbReference type="Pfam" id="PF00923">
    <property type="entry name" value="TAL_FSA"/>
    <property type="match status" value="1"/>
</dbReference>
<dbReference type="PIRSF" id="PIRSF036915">
    <property type="entry name" value="Trnald_Bac_Plnt"/>
    <property type="match status" value="1"/>
</dbReference>
<dbReference type="SUPFAM" id="SSF51569">
    <property type="entry name" value="Aldolase"/>
    <property type="match status" value="1"/>
</dbReference>
<dbReference type="PROSITE" id="PS01054">
    <property type="entry name" value="TRANSALDOLASE_1"/>
    <property type="match status" value="1"/>
</dbReference>
<dbReference type="PROSITE" id="PS00958">
    <property type="entry name" value="TRANSALDOLASE_2"/>
    <property type="match status" value="1"/>
</dbReference>
<keyword id="KW-0963">Cytoplasm</keyword>
<keyword id="KW-0570">Pentose shunt</keyword>
<keyword id="KW-0704">Schiff base</keyword>
<keyword id="KW-0808">Transferase</keyword>
<feature type="chain" id="PRO_1000026533" description="Transaldolase">
    <location>
        <begin position="1"/>
        <end position="380"/>
    </location>
</feature>
<feature type="active site" description="Schiff-base intermediate with substrate" evidence="1">
    <location>
        <position position="141"/>
    </location>
</feature>
<proteinExistence type="inferred from homology"/>